<reference key="1">
    <citation type="submission" date="1995-03" db="UniProtKB">
        <authorList>
            <person name="Pahl A."/>
            <person name="Schlumbohm W."/>
            <person name="Keller U."/>
        </authorList>
    </citation>
    <scope>PROTEIN SEQUENCE</scope>
</reference>
<keyword id="KW-0045">Antibiotic biosynthesis</keyword>
<keyword id="KW-0903">Direct protein sequencing</keyword>
<accession>P80437</accession>
<comment type="function">
    <text>Involved in etamycin biosynthesis.</text>
</comment>
<name>HPAA_STRGD</name>
<proteinExistence type="evidence at protein level"/>
<sequence length="21" mass="2313">MLDGVVARPQEXAARYYAAGY</sequence>
<feature type="chain" id="PRO_0000084031" description="Hydroxypicolinic acid-activating enzyme">
    <location>
        <begin position="1"/>
        <end position="21" status="greater than"/>
    </location>
</feature>
<feature type="non-terminal residue">
    <location>
        <position position="21"/>
    </location>
</feature>
<dbReference type="GO" id="GO:0017000">
    <property type="term" value="P:antibiotic biosynthetic process"/>
    <property type="evidence" value="ECO:0007669"/>
    <property type="project" value="UniProtKB-KW"/>
</dbReference>
<organism>
    <name type="scientific">Streptomyces griseoviridis</name>
    <dbReference type="NCBI Taxonomy" id="45398"/>
    <lineage>
        <taxon>Bacteria</taxon>
        <taxon>Bacillati</taxon>
        <taxon>Actinomycetota</taxon>
        <taxon>Actinomycetes</taxon>
        <taxon>Kitasatosporales</taxon>
        <taxon>Streptomycetaceae</taxon>
        <taxon>Streptomyces</taxon>
    </lineage>
</organism>
<protein>
    <recommendedName>
        <fullName>Hydroxypicolinic acid-activating enzyme</fullName>
    </recommendedName>
</protein>